<name>POLS_IBDV5</name>
<protein>
    <recommendedName>
        <fullName>Structural polyprotein</fullName>
        <shortName>PP</shortName>
    </recommendedName>
    <component>
        <recommendedName>
            <fullName>Precursor of VP2</fullName>
            <shortName>Pre-VP2</shortName>
        </recommendedName>
    </component>
    <component>
        <recommendedName>
            <fullName>Capsid protein VP2</fullName>
        </recommendedName>
    </component>
    <component>
        <recommendedName>
            <fullName>Structural peptide 1</fullName>
            <shortName>p1</shortName>
        </recommendedName>
        <alternativeName>
            <fullName>pep46</fullName>
        </alternativeName>
    </component>
    <component>
        <recommendedName>
            <fullName>Structural peptide 2</fullName>
            <shortName>p2</shortName>
        </recommendedName>
        <alternativeName>
            <fullName>pep7a</fullName>
        </alternativeName>
    </component>
    <component>
        <recommendedName>
            <fullName>Structural peptide 3</fullName>
            <shortName>p3</shortName>
        </recommendedName>
        <alternativeName>
            <fullName>pep7b</fullName>
        </alternativeName>
    </component>
    <component>
        <recommendedName>
            <fullName>Structural peptide 4</fullName>
            <shortName>p4</shortName>
        </recommendedName>
        <alternativeName>
            <fullName>pep11</fullName>
        </alternativeName>
    </component>
    <component>
        <recommendedName>
            <fullName>Protease VP4</fullName>
            <ecNumber>3.4.21.-</ecNumber>
        </recommendedName>
        <alternativeName>
            <fullName>Non-structural protein VP4</fullName>
            <shortName>NS</shortName>
        </alternativeName>
    </component>
    <component>
        <recommendedName>
            <fullName>Capsid protein VP3</fullName>
        </recommendedName>
    </component>
</protein>
<proteinExistence type="inferred from homology"/>
<organismHost>
    <name type="scientific">Gallus gallus</name>
    <name type="common">Chicken</name>
    <dbReference type="NCBI Taxonomy" id="9031"/>
</organismHost>
<organismHost>
    <name type="scientific">Meleagris gallopavo</name>
    <name type="common">Wild turkey</name>
    <dbReference type="NCBI Taxonomy" id="9103"/>
</organismHost>
<reference key="1">
    <citation type="journal article" date="1990" name="J. Gen. Virol.">
        <title>A comparison of the sequences of segment A of four infectious bursal disease virus strains and identification of a variable region in VP2.</title>
        <authorList>
            <person name="Bayliss C.D."/>
            <person name="Spies U."/>
            <person name="Shaw K."/>
            <person name="Peters R.W."/>
            <person name="Papageorgiou A."/>
            <person name="Mueller H."/>
            <person name="Boursnell M.E.G."/>
        </authorList>
    </citation>
    <scope>NUCLEOTIDE SEQUENCE [GENOMIC RNA]</scope>
</reference>
<organism>
    <name type="scientific">Avian infectious bursal disease virus (strain 52/70)</name>
    <name type="common">IBDV</name>
    <name type="synonym">Gumboro disease virus</name>
    <dbReference type="NCBI Taxonomy" id="10996"/>
    <lineage>
        <taxon>Viruses</taxon>
        <taxon>Riboviria</taxon>
        <taxon>Orthornavirae</taxon>
        <taxon>Birnaviridae</taxon>
        <taxon>Avibirnavirus</taxon>
        <taxon>Avibirnavirus gumboroense</taxon>
    </lineage>
</organism>
<accession>P25219</accession>
<keyword id="KW-0167">Capsid protein</keyword>
<keyword id="KW-1035">Host cytoplasm</keyword>
<keyword id="KW-0378">Hydrolase</keyword>
<keyword id="KW-0479">Metal-binding</keyword>
<keyword id="KW-0645">Protease</keyword>
<keyword id="KW-0720">Serine protease</keyword>
<keyword id="KW-1146">T=13 icosahedral capsid protein</keyword>
<keyword id="KW-0946">Virion</keyword>
<dbReference type="EC" id="3.4.21.-"/>
<dbReference type="EMBL" id="D00869">
    <property type="protein sequence ID" value="BAA00745.1"/>
    <property type="molecule type" value="Genomic_RNA"/>
</dbReference>
<dbReference type="PIR" id="JQ0941">
    <property type="entry name" value="GNXS52"/>
</dbReference>
<dbReference type="BMRB" id="P25219"/>
<dbReference type="SMR" id="P25219"/>
<dbReference type="MEROPS" id="S50.002"/>
<dbReference type="GO" id="GO:0030430">
    <property type="term" value="C:host cell cytoplasm"/>
    <property type="evidence" value="ECO:0007669"/>
    <property type="project" value="UniProtKB-SubCell"/>
</dbReference>
<dbReference type="GO" id="GO:0039621">
    <property type="term" value="C:T=13 icosahedral viral capsid"/>
    <property type="evidence" value="ECO:0007669"/>
    <property type="project" value="UniProtKB-KW"/>
</dbReference>
<dbReference type="GO" id="GO:0046872">
    <property type="term" value="F:metal ion binding"/>
    <property type="evidence" value="ECO:0007669"/>
    <property type="project" value="UniProtKB-KW"/>
</dbReference>
<dbReference type="GO" id="GO:0008236">
    <property type="term" value="F:serine-type peptidase activity"/>
    <property type="evidence" value="ECO:0007669"/>
    <property type="project" value="UniProtKB-KW"/>
</dbReference>
<dbReference type="GO" id="GO:0005198">
    <property type="term" value="F:structural molecule activity"/>
    <property type="evidence" value="ECO:0007669"/>
    <property type="project" value="InterPro"/>
</dbReference>
<dbReference type="GO" id="GO:0006508">
    <property type="term" value="P:proteolysis"/>
    <property type="evidence" value="ECO:0007669"/>
    <property type="project" value="UniProtKB-KW"/>
</dbReference>
<dbReference type="FunFam" id="2.60.120.660:FF:000001">
    <property type="entry name" value="Structural polyprotein"/>
    <property type="match status" value="1"/>
</dbReference>
<dbReference type="Gene3D" id="2.60.120.20">
    <property type="match status" value="1"/>
</dbReference>
<dbReference type="Gene3D" id="6.10.250.1030">
    <property type="match status" value="1"/>
</dbReference>
<dbReference type="Gene3D" id="1.10.8.880">
    <property type="entry name" value="Birnavirus VP3 protein, domain 2"/>
    <property type="match status" value="1"/>
</dbReference>
<dbReference type="Gene3D" id="1.10.150.620">
    <property type="entry name" value="Capsid protein VP3, domain 1"/>
    <property type="match status" value="1"/>
</dbReference>
<dbReference type="Gene3D" id="2.60.120.660">
    <property type="entry name" value="icosahedral virus"/>
    <property type="match status" value="1"/>
</dbReference>
<dbReference type="InterPro" id="IPR002662">
    <property type="entry name" value="Birna_VP2"/>
</dbReference>
<dbReference type="InterPro" id="IPR002663">
    <property type="entry name" value="Birna_VP3"/>
</dbReference>
<dbReference type="InterPro" id="IPR043048">
    <property type="entry name" value="Birna_VP3_dom1"/>
</dbReference>
<dbReference type="InterPro" id="IPR043049">
    <property type="entry name" value="Birna_VP3_dom2"/>
</dbReference>
<dbReference type="InterPro" id="IPR025775">
    <property type="entry name" value="Birna_VP4_Prtase_dom"/>
</dbReference>
<dbReference type="InterPro" id="IPR029053">
    <property type="entry name" value="Viral_coat"/>
</dbReference>
<dbReference type="Pfam" id="PF01766">
    <property type="entry name" value="Birna_VP2"/>
    <property type="match status" value="1"/>
</dbReference>
<dbReference type="Pfam" id="PF01767">
    <property type="entry name" value="Birna_VP3"/>
    <property type="match status" value="1"/>
</dbReference>
<dbReference type="Pfam" id="PF01768">
    <property type="entry name" value="Birna_VP4"/>
    <property type="match status" value="1"/>
</dbReference>
<dbReference type="SUPFAM" id="SSF88633">
    <property type="entry name" value="Positive stranded ssRNA viruses"/>
    <property type="match status" value="1"/>
</dbReference>
<dbReference type="PROSITE" id="PS51548">
    <property type="entry name" value="BIRNAVIRUS_VP4_PRO"/>
    <property type="match status" value="1"/>
</dbReference>
<evidence type="ECO:0000250" key="1"/>
<evidence type="ECO:0000255" key="2">
    <source>
        <dbReference type="PROSITE-ProRule" id="PRU00881"/>
    </source>
</evidence>
<evidence type="ECO:0000256" key="3">
    <source>
        <dbReference type="SAM" id="MobiDB-lite"/>
    </source>
</evidence>
<evidence type="ECO:0000305" key="4"/>
<comment type="function">
    <text evidence="1">Capsid protein VP2 self assembles to form an icosahedral capsid with a T=13 symmetry, about 70 nm in diameter, and consisting of 260 VP2 trimers. The capsid encapsulates the genomic dsRNA. VP2 is also involved in attachment and entry into the host cell by interacting with host ITGA4/ITGB1 (By similarity).</text>
</comment>
<comment type="function">
    <text evidence="1">The precursor of VP2 plays an important role in capsid assembly. First, pre-VP2 and VP2 oligomers assemble to form a procapsid. Then, the pre-VP2 intermediates may be processed into VP2 proteins by proteolytic cleavage mediated by VP4 to obtain the mature virion. The final capsid is composed of pentamers and hexamers but VP2 has a natural tendency to assemble into all-pentameric structures. Therefore pre-VP2 may be required to allow formation of the hexameric structures (By similarity).</text>
</comment>
<comment type="function">
    <text evidence="2">Protease VP4 is a serine protease that cleaves the polyprotein into its final products. Pre-VP2 is first partially cleaved, and may be completely processed by VP4 upon capsid maturation.</text>
</comment>
<comment type="function">
    <text evidence="1">Capsid protein VP3 plays a key role in virion assembly by providing a scaffold for the capsid made of VP2. May self-assemble to form a T=4-like icosahedral inner-capsid composed of at least 180 trimers. Plays a role in genomic RNA packaging by recruiting VP1 into the capsid and interacting with the dsRNA genome segments to form a ribonucleoprotein complex. Additionally, the interaction of the VP3 C-terminal tail with VP1 removes the inherent structural blockade of the polymerase active site. Thus, VP3 can also function as a transcriptional activator (By similarity).</text>
</comment>
<comment type="function">
    <text evidence="1">Structural peptide 1 is a small peptide derived from pre-VP2 C-terminus. It destabilizes and perforates cell membranes, suggesting a role during entry (By similarity).</text>
</comment>
<comment type="function">
    <text evidence="1">Structural peptide 2 is a small peptide derived from pVP2 C-terminus. It is not essential for the virus viability, but viral growth is affected when missing (By similarity).</text>
</comment>
<comment type="function">
    <text evidence="1">Structural peptide 3 is a small peptide derived from pVP2 C-terminus. It is not essential for the virus viability, but viral growth is affected when missing (By similarity).</text>
</comment>
<comment type="function">
    <text evidence="1">Structural peptide 4 is a small peptide derived from pVP2 C-terminus. It is essential for the virus viability (By similarity).</text>
</comment>
<comment type="subunit">
    <molecule>Capsid protein VP2</molecule>
    <text evidence="1">Homotrimer. A central divalent metal stabilizes the VP2 trimer (By similarity). Interacts with host ITGA4/ITGB1.</text>
</comment>
<comment type="subunit">
    <molecule>Capsid protein VP3</molecule>
    <text evidence="1">Homodimer. Interacts (via C-terminus) with VP1 in the cytoplasm. Interacts with VP2 (By similarity).</text>
</comment>
<comment type="subcellular location">
    <molecule>Capsid protein VP2</molecule>
    <subcellularLocation>
        <location evidence="4">Virion</location>
    </subcellularLocation>
    <subcellularLocation>
        <location evidence="4">Host cytoplasm</location>
    </subcellularLocation>
</comment>
<comment type="subcellular location">
    <molecule>Capsid protein VP3</molecule>
    <subcellularLocation>
        <location evidence="4">Virion</location>
    </subcellularLocation>
    <subcellularLocation>
        <location evidence="4">Host cytoplasm</location>
    </subcellularLocation>
</comment>
<comment type="subcellular location">
    <molecule>Structural peptide 1</molecule>
    <subcellularLocation>
        <location evidence="4">Virion</location>
    </subcellularLocation>
    <subcellularLocation>
        <location evidence="4">Host cytoplasm</location>
    </subcellularLocation>
</comment>
<comment type="subcellular location">
    <molecule>Structural peptide 2</molecule>
    <subcellularLocation>
        <location evidence="4">Virion</location>
    </subcellularLocation>
    <subcellularLocation>
        <location evidence="4">Host cytoplasm</location>
    </subcellularLocation>
</comment>
<comment type="subcellular location">
    <molecule>Structural peptide 3</molecule>
    <subcellularLocation>
        <location evidence="4">Virion</location>
    </subcellularLocation>
    <subcellularLocation>
        <location evidence="4">Host cytoplasm</location>
    </subcellularLocation>
</comment>
<comment type="subcellular location">
    <molecule>Structural peptide 4</molecule>
    <subcellularLocation>
        <location evidence="4">Virion</location>
    </subcellularLocation>
    <subcellularLocation>
        <location evidence="4">Host cytoplasm</location>
    </subcellularLocation>
</comment>
<comment type="PTM">
    <text evidence="1">Specific enzymatic cleavages yield mature proteins. The capsid assembly seems to be regulated by polyprotein processing. The protease VP4 cleaves itself off the polyprotein, thus releasing pre-VP2 and VP3 within the infected cell. During capsid assembly, the C-terminus of pre-VP2 is further processed by VP4, giving rise to VP2, the external capsid protein and three small peptides that all stay closely associated with the capsid (By similarity).</text>
</comment>
<feature type="chain" id="PRO_0000392584" description="Structural polyprotein">
    <location>
        <begin position="1"/>
        <end position="1012"/>
    </location>
</feature>
<feature type="chain" id="PRO_0000392585" description="Precursor of VP2">
    <location>
        <begin position="1"/>
        <end position="512"/>
    </location>
</feature>
<feature type="chain" id="PRO_0000036759" description="Capsid protein VP2" evidence="1">
    <location>
        <begin position="1"/>
        <end position="441"/>
    </location>
</feature>
<feature type="peptide" id="PRO_0000227823" description="Structural peptide 1" evidence="1">
    <location>
        <begin position="442"/>
        <end position="487"/>
    </location>
</feature>
<feature type="peptide" id="PRO_0000227824" description="Structural peptide 2" evidence="1">
    <location>
        <begin position="488"/>
        <end position="494"/>
    </location>
</feature>
<feature type="peptide" id="PRO_0000227825" description="Structural peptide 3" evidence="1">
    <location>
        <begin position="495"/>
        <end position="501"/>
    </location>
</feature>
<feature type="peptide" id="PRO_0000227826" description="Structural peptide 4" evidence="1">
    <location>
        <begin position="502"/>
        <end position="512"/>
    </location>
</feature>
<feature type="chain" id="PRO_0000036760" description="Protease VP4" evidence="1">
    <location>
        <begin position="513"/>
        <end position="755"/>
    </location>
</feature>
<feature type="chain" id="PRO_0000036761" description="Capsid protein VP3" evidence="1">
    <location>
        <begin position="756"/>
        <end position="1012"/>
    </location>
</feature>
<feature type="domain" description="Peptidase S50" evidence="2">
    <location>
        <begin position="513"/>
        <end position="755"/>
    </location>
</feature>
<feature type="region of interest" description="Disordered" evidence="3">
    <location>
        <begin position="837"/>
        <end position="857"/>
    </location>
</feature>
<feature type="region of interest" description="Disordered" evidence="3">
    <location>
        <begin position="968"/>
        <end position="1012"/>
    </location>
</feature>
<feature type="region of interest" description="Interaction with VP1 protein" evidence="1">
    <location>
        <begin position="1003"/>
        <end position="1012"/>
    </location>
</feature>
<feature type="compositionally biased region" description="Basic residues" evidence="3">
    <location>
        <begin position="975"/>
        <end position="986"/>
    </location>
</feature>
<feature type="active site" description="Nucleophile" evidence="2">
    <location>
        <position position="652"/>
    </location>
</feature>
<feature type="active site" evidence="2">
    <location>
        <position position="692"/>
    </location>
</feature>
<feature type="binding site" evidence="1">
    <location>
        <position position="30"/>
    </location>
    <ligand>
        <name>a divalent metal cation</name>
        <dbReference type="ChEBI" id="CHEBI:60240"/>
        <note>ligand shared between trimeric partners</note>
    </ligand>
</feature>
<feature type="site" description="Cleavage; by protease VP4" evidence="1">
    <location>
        <begin position="441"/>
        <end position="442"/>
    </location>
</feature>
<feature type="site" description="Cleavage; by protease VP4" evidence="1">
    <location>
        <begin position="487"/>
        <end position="488"/>
    </location>
</feature>
<feature type="site" description="Cleavage; by protease VP4" evidence="1">
    <location>
        <begin position="494"/>
        <end position="495"/>
    </location>
</feature>
<feature type="site" description="Cleavage; by protease VP4" evidence="1">
    <location>
        <begin position="501"/>
        <end position="502"/>
    </location>
</feature>
<feature type="site" description="Cleavage; by protease VP4" evidence="1">
    <location>
        <begin position="512"/>
        <end position="513"/>
    </location>
</feature>
<feature type="site" description="Cleavage; by protease VP4" evidence="1">
    <location>
        <begin position="755"/>
        <end position="756"/>
    </location>
</feature>
<sequence length="1012" mass="109568">MTNLQDQTQQIVPFIRSLLMPTTGPASIPDDTLEKHTLRSETSTYNLTVGDTGSGLIVFFPGFPGSIVGAHYTLQSNGNYKFDQMLLTAQNLPASYNYCRLVSRSLTVRSSTLPGGVYALNGTINAVTFQGSLSELTDVSYNGLMSATANINDKIGNVLVGEGVTVLSLPTSYDLGYVRLGDPIPAIGLDPKMVATCDSSDRPRVYTITAADDYQFSSQYQPGGVTITLFSANIDAITSLSIGGELVFQTSVQGLVLGATIYLIGFDGTAVITRAVAADNGLTAGTDNLMPFNLVIPTNEITQPITSIKLEIVTSKSGGQAGDQMSWSASGSLAVTIHGGNYPGALRPVTLVAYERVATGSVVTVAGVSNFELIPNPELAKNLVTEYGRFDPGAMNYTKLILSERDRLGIKTVWPTREYTDFREYFMEVADLNSPLKIAGAFGFKDIIRAIRRIAVPVVSTLFPPAAPLAHAIGEGVDYLLGDEAQAASGTARAASGKARAASGRIRQLTLAADKGYEVVANLFQVPQNPVVDGILASPGVLRGAHNLDCVLREGATLFPVVITTVEDAMTPKALNSKMFAVIEGVREDLQPPSQRGSFIRTLSGHRVYGYAPDGVLPLETGRDYTVVPIDDVWDDSIMLSKDPIPPIVGNSGNLAIAYMDVFRPKVPIHVAMTGAPNACGEIEKISFRSTKLATAHRLGLKLAGPGAFDVNTGPNWATFIKRFPHNPRDWDRLPYLNLPYLPPNAGRQYHLAMAASEFKDTPELESAVRAMEAAANVDSLFQSALSVFMWLEENGIVTDMANFTLSDPNAHRMRNFLANAPQAGSKSQRAKYGTAGYGVEARGPTPEEAQRKKDTRISKKMETMGIYFATPEWVALNGHRGPSPGQLKYWQNTREIPDPNEDYLDYVHAEKSRLASDEQILRAATSIYGAPGQAEPPQAFIDEVAKVYEINHGRGPNQEQMKDLLLTAMEMKHRNPRRAPPKPKPKPNAPTQRPPGRLGRWIRTVSDEDLE</sequence>